<evidence type="ECO:0000255" key="1">
    <source>
        <dbReference type="HAMAP-Rule" id="MF_01454"/>
    </source>
</evidence>
<evidence type="ECO:0000255" key="2">
    <source>
        <dbReference type="PROSITE-ProRule" id="PRU01231"/>
    </source>
</evidence>
<accession>Q57B45</accession>
<proteinExistence type="inferred from homology"/>
<sequence>MKFLDQAKIYIRSGNGGAGAVSFRREKFLEFGGPDGGDGGRGGDVWVEAVDGLNTLIDYRYQQHFKAKTGMHGMGRNMTGGKGDDVVLRVPVGTQIFEEDNETLICDITEVGQRYRLAKGGNGGFGNLHFTTSTNRAPRRANPGQEGIERTIWLRLKLIADAGLVGLPNAGKSTFLASVTAAKPKIADYPFTTLHPNLGVARIDGREFVIADIPGLIEGASEGVGLGDRFLGHVERTRVLLHLVSAQEEDVAKAYQVIRGELEAYEHGLADKPEIVALSQVDTLDPETRKAKVKALKKACGCEPLLLSAVSHEGLNDTLRQLARIIDLSRAEEAGTAQAEE</sequence>
<protein>
    <recommendedName>
        <fullName evidence="1">GTPase Obg</fullName>
        <ecNumber evidence="1">3.6.5.-</ecNumber>
    </recommendedName>
    <alternativeName>
        <fullName evidence="1">GTP-binding protein Obg</fullName>
    </alternativeName>
</protein>
<keyword id="KW-0963">Cytoplasm</keyword>
<keyword id="KW-0342">GTP-binding</keyword>
<keyword id="KW-0378">Hydrolase</keyword>
<keyword id="KW-0460">Magnesium</keyword>
<keyword id="KW-0479">Metal-binding</keyword>
<keyword id="KW-0547">Nucleotide-binding</keyword>
<feature type="chain" id="PRO_0000385765" description="GTPase Obg">
    <location>
        <begin position="1"/>
        <end position="341"/>
    </location>
</feature>
<feature type="domain" description="Obg" evidence="2">
    <location>
        <begin position="1"/>
        <end position="159"/>
    </location>
</feature>
<feature type="domain" description="OBG-type G" evidence="1">
    <location>
        <begin position="160"/>
        <end position="327"/>
    </location>
</feature>
<feature type="binding site" evidence="1">
    <location>
        <begin position="166"/>
        <end position="173"/>
    </location>
    <ligand>
        <name>GTP</name>
        <dbReference type="ChEBI" id="CHEBI:37565"/>
    </ligand>
</feature>
<feature type="binding site" evidence="1">
    <location>
        <position position="173"/>
    </location>
    <ligand>
        <name>Mg(2+)</name>
        <dbReference type="ChEBI" id="CHEBI:18420"/>
    </ligand>
</feature>
<feature type="binding site" evidence="1">
    <location>
        <begin position="191"/>
        <end position="195"/>
    </location>
    <ligand>
        <name>GTP</name>
        <dbReference type="ChEBI" id="CHEBI:37565"/>
    </ligand>
</feature>
<feature type="binding site" evidence="1">
    <location>
        <position position="193"/>
    </location>
    <ligand>
        <name>Mg(2+)</name>
        <dbReference type="ChEBI" id="CHEBI:18420"/>
    </ligand>
</feature>
<feature type="binding site" evidence="1">
    <location>
        <begin position="212"/>
        <end position="215"/>
    </location>
    <ligand>
        <name>GTP</name>
        <dbReference type="ChEBI" id="CHEBI:37565"/>
    </ligand>
</feature>
<feature type="binding site" evidence="1">
    <location>
        <begin position="279"/>
        <end position="282"/>
    </location>
    <ligand>
        <name>GTP</name>
        <dbReference type="ChEBI" id="CHEBI:37565"/>
    </ligand>
</feature>
<feature type="binding site" evidence="1">
    <location>
        <begin position="308"/>
        <end position="310"/>
    </location>
    <ligand>
        <name>GTP</name>
        <dbReference type="ChEBI" id="CHEBI:37565"/>
    </ligand>
</feature>
<reference key="1">
    <citation type="journal article" date="2005" name="J. Bacteriol.">
        <title>Completion of the genome sequence of Brucella abortus and comparison to the highly similar genomes of Brucella melitensis and Brucella suis.</title>
        <authorList>
            <person name="Halling S.M."/>
            <person name="Peterson-Burch B.D."/>
            <person name="Bricker B.J."/>
            <person name="Zuerner R.L."/>
            <person name="Qing Z."/>
            <person name="Li L.-L."/>
            <person name="Kapur V."/>
            <person name="Alt D.P."/>
            <person name="Olsen S.C."/>
        </authorList>
    </citation>
    <scope>NUCLEOTIDE SEQUENCE [LARGE SCALE GENOMIC DNA]</scope>
    <source>
        <strain>9-941</strain>
    </source>
</reference>
<dbReference type="EC" id="3.6.5.-" evidence="1"/>
<dbReference type="EMBL" id="AE017223">
    <property type="protein sequence ID" value="AAX75139.1"/>
    <property type="molecule type" value="Genomic_DNA"/>
</dbReference>
<dbReference type="SMR" id="Q57B45"/>
<dbReference type="EnsemblBacteria" id="AAX75139">
    <property type="protein sequence ID" value="AAX75139"/>
    <property type="gene ID" value="BruAb1_1824"/>
</dbReference>
<dbReference type="KEGG" id="bmb:BruAb1_1824"/>
<dbReference type="HOGENOM" id="CLU_011747_2_0_5"/>
<dbReference type="Proteomes" id="UP000000540">
    <property type="component" value="Chromosome I"/>
</dbReference>
<dbReference type="GO" id="GO:0005737">
    <property type="term" value="C:cytoplasm"/>
    <property type="evidence" value="ECO:0007669"/>
    <property type="project" value="UniProtKB-SubCell"/>
</dbReference>
<dbReference type="GO" id="GO:0005525">
    <property type="term" value="F:GTP binding"/>
    <property type="evidence" value="ECO:0007669"/>
    <property type="project" value="UniProtKB-UniRule"/>
</dbReference>
<dbReference type="GO" id="GO:0003924">
    <property type="term" value="F:GTPase activity"/>
    <property type="evidence" value="ECO:0007669"/>
    <property type="project" value="UniProtKB-UniRule"/>
</dbReference>
<dbReference type="GO" id="GO:0000287">
    <property type="term" value="F:magnesium ion binding"/>
    <property type="evidence" value="ECO:0007669"/>
    <property type="project" value="InterPro"/>
</dbReference>
<dbReference type="GO" id="GO:0042254">
    <property type="term" value="P:ribosome biogenesis"/>
    <property type="evidence" value="ECO:0007669"/>
    <property type="project" value="UniProtKB-UniRule"/>
</dbReference>
<dbReference type="CDD" id="cd01898">
    <property type="entry name" value="Obg"/>
    <property type="match status" value="1"/>
</dbReference>
<dbReference type="FunFam" id="2.70.210.12:FF:000001">
    <property type="entry name" value="GTPase Obg"/>
    <property type="match status" value="1"/>
</dbReference>
<dbReference type="Gene3D" id="2.70.210.12">
    <property type="entry name" value="GTP1/OBG domain"/>
    <property type="match status" value="1"/>
</dbReference>
<dbReference type="Gene3D" id="3.40.50.300">
    <property type="entry name" value="P-loop containing nucleotide triphosphate hydrolases"/>
    <property type="match status" value="1"/>
</dbReference>
<dbReference type="HAMAP" id="MF_01454">
    <property type="entry name" value="GTPase_Obg"/>
    <property type="match status" value="1"/>
</dbReference>
<dbReference type="InterPro" id="IPR031167">
    <property type="entry name" value="G_OBG"/>
</dbReference>
<dbReference type="InterPro" id="IPR006073">
    <property type="entry name" value="GTP-bd"/>
</dbReference>
<dbReference type="InterPro" id="IPR014100">
    <property type="entry name" value="GTP-bd_Obg/CgtA"/>
</dbReference>
<dbReference type="InterPro" id="IPR006074">
    <property type="entry name" value="GTP1-OBG_CS"/>
</dbReference>
<dbReference type="InterPro" id="IPR006169">
    <property type="entry name" value="GTP1_OBG_dom"/>
</dbReference>
<dbReference type="InterPro" id="IPR036726">
    <property type="entry name" value="GTP1_OBG_dom_sf"/>
</dbReference>
<dbReference type="InterPro" id="IPR045086">
    <property type="entry name" value="OBG_GTPase"/>
</dbReference>
<dbReference type="InterPro" id="IPR027417">
    <property type="entry name" value="P-loop_NTPase"/>
</dbReference>
<dbReference type="NCBIfam" id="TIGR02729">
    <property type="entry name" value="Obg_CgtA"/>
    <property type="match status" value="1"/>
</dbReference>
<dbReference type="NCBIfam" id="NF008955">
    <property type="entry name" value="PRK12297.1"/>
    <property type="match status" value="1"/>
</dbReference>
<dbReference type="NCBIfam" id="NF008956">
    <property type="entry name" value="PRK12299.1"/>
    <property type="match status" value="1"/>
</dbReference>
<dbReference type="PANTHER" id="PTHR11702">
    <property type="entry name" value="DEVELOPMENTALLY REGULATED GTP-BINDING PROTEIN-RELATED"/>
    <property type="match status" value="1"/>
</dbReference>
<dbReference type="PANTHER" id="PTHR11702:SF31">
    <property type="entry name" value="MITOCHONDRIAL RIBOSOME-ASSOCIATED GTPASE 2"/>
    <property type="match status" value="1"/>
</dbReference>
<dbReference type="Pfam" id="PF01018">
    <property type="entry name" value="GTP1_OBG"/>
    <property type="match status" value="1"/>
</dbReference>
<dbReference type="Pfam" id="PF01926">
    <property type="entry name" value="MMR_HSR1"/>
    <property type="match status" value="1"/>
</dbReference>
<dbReference type="PIRSF" id="PIRSF002401">
    <property type="entry name" value="GTP_bd_Obg/CgtA"/>
    <property type="match status" value="1"/>
</dbReference>
<dbReference type="PRINTS" id="PR00326">
    <property type="entry name" value="GTP1OBG"/>
</dbReference>
<dbReference type="SUPFAM" id="SSF82051">
    <property type="entry name" value="Obg GTP-binding protein N-terminal domain"/>
    <property type="match status" value="1"/>
</dbReference>
<dbReference type="SUPFAM" id="SSF52540">
    <property type="entry name" value="P-loop containing nucleoside triphosphate hydrolases"/>
    <property type="match status" value="1"/>
</dbReference>
<dbReference type="PROSITE" id="PS51710">
    <property type="entry name" value="G_OBG"/>
    <property type="match status" value="1"/>
</dbReference>
<dbReference type="PROSITE" id="PS00905">
    <property type="entry name" value="GTP1_OBG"/>
    <property type="match status" value="1"/>
</dbReference>
<dbReference type="PROSITE" id="PS51883">
    <property type="entry name" value="OBG"/>
    <property type="match status" value="1"/>
</dbReference>
<gene>
    <name evidence="1" type="primary">obg</name>
    <name type="ordered locus">BruAb1_1824</name>
</gene>
<name>OBG_BRUAB</name>
<organism>
    <name type="scientific">Brucella abortus biovar 1 (strain 9-941)</name>
    <dbReference type="NCBI Taxonomy" id="262698"/>
    <lineage>
        <taxon>Bacteria</taxon>
        <taxon>Pseudomonadati</taxon>
        <taxon>Pseudomonadota</taxon>
        <taxon>Alphaproteobacteria</taxon>
        <taxon>Hyphomicrobiales</taxon>
        <taxon>Brucellaceae</taxon>
        <taxon>Brucella/Ochrobactrum group</taxon>
        <taxon>Brucella</taxon>
    </lineage>
</organism>
<comment type="function">
    <text evidence="1">An essential GTPase which binds GTP, GDP and possibly (p)ppGpp with moderate affinity, with high nucleotide exchange rates and a fairly low GTP hydrolysis rate. Plays a role in control of the cell cycle, stress response, ribosome biogenesis and in those bacteria that undergo differentiation, in morphogenesis control.</text>
</comment>
<comment type="cofactor">
    <cofactor evidence="1">
        <name>Mg(2+)</name>
        <dbReference type="ChEBI" id="CHEBI:18420"/>
    </cofactor>
</comment>
<comment type="subunit">
    <text evidence="1">Monomer.</text>
</comment>
<comment type="subcellular location">
    <subcellularLocation>
        <location evidence="1">Cytoplasm</location>
    </subcellularLocation>
</comment>
<comment type="similarity">
    <text evidence="1">Belongs to the TRAFAC class OBG-HflX-like GTPase superfamily. OBG GTPase family.</text>
</comment>